<sequence length="258" mass="29588">MATSRLEINFVRLLSRCESLASEKRAETEWRLEKYVGALEEMFVALKKSPSKPTPETLTDYNRKVDFLKGLLEAEKLPSPAEKSLANQFLAPGRTPTISSERTPASKTVHIQSKARCAGEMRKELMSSGVSNSALLENDLRHRKSLPVDERQSAAELDQILQHHHNLQEKLADDMLNLARNLKNNTLAAQNIIKQDNQTLTQSMRQADVNFEKLKTESERLEQHAKKSVNWFLWLMLIVVSFTFISMILFIRLFPRLR</sequence>
<dbReference type="EMBL" id="BC052105">
    <property type="protein sequence ID" value="AAH52105.1"/>
    <property type="molecule type" value="mRNA"/>
</dbReference>
<dbReference type="RefSeq" id="NP_956618.1">
    <property type="nucleotide sequence ID" value="NM_200324.2"/>
</dbReference>
<dbReference type="SMR" id="Q7ZTY7"/>
<dbReference type="BioGRID" id="89445">
    <property type="interactions" value="1"/>
</dbReference>
<dbReference type="FunCoup" id="Q7ZTY7">
    <property type="interactions" value="1556"/>
</dbReference>
<dbReference type="STRING" id="7955.ENSDARP00000024706"/>
<dbReference type="PaxDb" id="7955-ENSDARP00000024706"/>
<dbReference type="GeneID" id="393294"/>
<dbReference type="KEGG" id="dre:393294"/>
<dbReference type="AGR" id="ZFIN:ZDB-GENE-040426-1015"/>
<dbReference type="CTD" id="55850"/>
<dbReference type="ZFIN" id="ZDB-GENE-040426-1015">
    <property type="gene designation" value="use1"/>
</dbReference>
<dbReference type="eggNOG" id="KOG2678">
    <property type="taxonomic scope" value="Eukaryota"/>
</dbReference>
<dbReference type="InParanoid" id="Q7ZTY7"/>
<dbReference type="OrthoDB" id="4506189at2759"/>
<dbReference type="Reactome" id="R-DRE-6811434">
    <property type="pathway name" value="COPI-dependent Golgi-to-ER retrograde traffic"/>
</dbReference>
<dbReference type="PRO" id="PR:Q7ZTY7"/>
<dbReference type="Proteomes" id="UP000000437">
    <property type="component" value="Chromosome 22"/>
</dbReference>
<dbReference type="GO" id="GO:0005783">
    <property type="term" value="C:endoplasmic reticulum"/>
    <property type="evidence" value="ECO:0000318"/>
    <property type="project" value="GO_Central"/>
</dbReference>
<dbReference type="GO" id="GO:0005789">
    <property type="term" value="C:endoplasmic reticulum membrane"/>
    <property type="evidence" value="ECO:0007669"/>
    <property type="project" value="UniProtKB-SubCell"/>
</dbReference>
<dbReference type="GO" id="GO:0031201">
    <property type="term" value="C:SNARE complex"/>
    <property type="evidence" value="ECO:0000318"/>
    <property type="project" value="GO_Central"/>
</dbReference>
<dbReference type="GO" id="GO:0005484">
    <property type="term" value="F:SNAP receptor activity"/>
    <property type="evidence" value="ECO:0000318"/>
    <property type="project" value="GO_Central"/>
</dbReference>
<dbReference type="GO" id="GO:0015031">
    <property type="term" value="P:protein transport"/>
    <property type="evidence" value="ECO:0007669"/>
    <property type="project" value="UniProtKB-KW"/>
</dbReference>
<dbReference type="GO" id="GO:0006890">
    <property type="term" value="P:retrograde vesicle-mediated transport, Golgi to endoplasmic reticulum"/>
    <property type="evidence" value="ECO:0000318"/>
    <property type="project" value="GO_Central"/>
</dbReference>
<dbReference type="CDD" id="cd15860">
    <property type="entry name" value="SNARE_USE1"/>
    <property type="match status" value="1"/>
</dbReference>
<dbReference type="InterPro" id="IPR019150">
    <property type="entry name" value="Vesicle_transport_protein_Use1"/>
</dbReference>
<dbReference type="PANTHER" id="PTHR13050">
    <property type="entry name" value="USE1-LIKE PROTEIN"/>
    <property type="match status" value="1"/>
</dbReference>
<dbReference type="PANTHER" id="PTHR13050:SF7">
    <property type="entry name" value="VESICLE TRANSPORT PROTEIN USE1"/>
    <property type="match status" value="1"/>
</dbReference>
<dbReference type="Pfam" id="PF09753">
    <property type="entry name" value="Use1"/>
    <property type="match status" value="1"/>
</dbReference>
<feature type="chain" id="PRO_0000215581" description="Vesicle transport protein USE1">
    <location>
        <begin position="1"/>
        <end position="258"/>
    </location>
</feature>
<feature type="topological domain" description="Cytoplasmic" evidence="2">
    <location>
        <begin position="1"/>
        <end position="230"/>
    </location>
</feature>
<feature type="transmembrane region" description="Helical; Anchor for type IV membrane protein" evidence="2">
    <location>
        <begin position="231"/>
        <end position="251"/>
    </location>
</feature>
<feature type="topological domain" description="Extracellular" evidence="2">
    <location>
        <begin position="252"/>
        <end position="258"/>
    </location>
</feature>
<feature type="coiled-coil region" evidence="2">
    <location>
        <begin position="151"/>
        <end position="230"/>
    </location>
</feature>
<organism>
    <name type="scientific">Danio rerio</name>
    <name type="common">Zebrafish</name>
    <name type="synonym">Brachydanio rerio</name>
    <dbReference type="NCBI Taxonomy" id="7955"/>
    <lineage>
        <taxon>Eukaryota</taxon>
        <taxon>Metazoa</taxon>
        <taxon>Chordata</taxon>
        <taxon>Craniata</taxon>
        <taxon>Vertebrata</taxon>
        <taxon>Euteleostomi</taxon>
        <taxon>Actinopterygii</taxon>
        <taxon>Neopterygii</taxon>
        <taxon>Teleostei</taxon>
        <taxon>Ostariophysi</taxon>
        <taxon>Cypriniformes</taxon>
        <taxon>Danionidae</taxon>
        <taxon>Danioninae</taxon>
        <taxon>Danio</taxon>
    </lineage>
</organism>
<proteinExistence type="evidence at transcript level"/>
<accession>Q7ZTY7</accession>
<reference key="1">
    <citation type="submission" date="2003-05" db="EMBL/GenBank/DDBJ databases">
        <authorList>
            <consortium name="NIH - Zebrafish Gene Collection (ZGC) project"/>
        </authorList>
    </citation>
    <scope>NUCLEOTIDE SEQUENCE [LARGE SCALE MRNA]</scope>
</reference>
<protein>
    <recommendedName>
        <fullName>Vesicle transport protein USE1</fullName>
    </recommendedName>
    <alternativeName>
        <fullName>USE1-like protein</fullName>
    </alternativeName>
</protein>
<name>USE1_DANRE</name>
<evidence type="ECO:0000250" key="1"/>
<evidence type="ECO:0000255" key="2"/>
<evidence type="ECO:0000305" key="3"/>
<keyword id="KW-0175">Coiled coil</keyword>
<keyword id="KW-0256">Endoplasmic reticulum</keyword>
<keyword id="KW-0931">ER-Golgi transport</keyword>
<keyword id="KW-0472">Membrane</keyword>
<keyword id="KW-0653">Protein transport</keyword>
<keyword id="KW-1185">Reference proteome</keyword>
<keyword id="KW-0812">Transmembrane</keyword>
<keyword id="KW-1133">Transmembrane helix</keyword>
<keyword id="KW-0813">Transport</keyword>
<gene>
    <name type="primary">use1</name>
    <name type="synonym">use1l</name>
    <name type="ORF">zgc:56402</name>
</gene>
<comment type="function">
    <text evidence="1">SNARE that may be involved in targeting and fusion of Golgi-derived retrograde transport vesicles with the ER.</text>
</comment>
<comment type="subcellular location">
    <subcellularLocation>
        <location evidence="1">Endoplasmic reticulum membrane</location>
        <topology evidence="1">Single-pass type IV membrane protein</topology>
    </subcellularLocation>
</comment>
<comment type="similarity">
    <text evidence="3">Belongs to the USE1 family.</text>
</comment>